<keyword id="KW-0143">Chaperone</keyword>
<keyword id="KW-0963">Cytoplasm</keyword>
<keyword id="KW-0342">GTP-binding</keyword>
<keyword id="KW-0996">Nickel insertion</keyword>
<keyword id="KW-0547">Nucleotide-binding</keyword>
<keyword id="KW-1185">Reference proteome</keyword>
<feature type="chain" id="PRO_1000145193" description="Urease accessory protein UreG">
    <location>
        <begin position="1"/>
        <end position="224"/>
    </location>
</feature>
<feature type="region of interest" description="Disordered" evidence="2">
    <location>
        <begin position="1"/>
        <end position="25"/>
    </location>
</feature>
<feature type="compositionally biased region" description="Basic residues" evidence="2">
    <location>
        <begin position="1"/>
        <end position="20"/>
    </location>
</feature>
<feature type="binding site" evidence="1">
    <location>
        <begin position="32"/>
        <end position="39"/>
    </location>
    <ligand>
        <name>GTP</name>
        <dbReference type="ChEBI" id="CHEBI:37565"/>
    </ligand>
</feature>
<protein>
    <recommendedName>
        <fullName evidence="1">Urease accessory protein UreG</fullName>
    </recommendedName>
</protein>
<proteinExistence type="inferred from homology"/>
<organism>
    <name type="scientific">Mycobacterium tuberculosis (strain ATCC 25177 / H37Ra)</name>
    <dbReference type="NCBI Taxonomy" id="419947"/>
    <lineage>
        <taxon>Bacteria</taxon>
        <taxon>Bacillati</taxon>
        <taxon>Actinomycetota</taxon>
        <taxon>Actinomycetes</taxon>
        <taxon>Mycobacteriales</taxon>
        <taxon>Mycobacteriaceae</taxon>
        <taxon>Mycobacterium</taxon>
        <taxon>Mycobacterium tuberculosis complex</taxon>
    </lineage>
</organism>
<dbReference type="EMBL" id="CP000611">
    <property type="protein sequence ID" value="ABQ73619.1"/>
    <property type="molecule type" value="Genomic_DNA"/>
</dbReference>
<dbReference type="RefSeq" id="WP_003409313.1">
    <property type="nucleotide sequence ID" value="NZ_CP016972.1"/>
</dbReference>
<dbReference type="SMR" id="A5U3L9"/>
<dbReference type="KEGG" id="mra:MRA_1863"/>
<dbReference type="eggNOG" id="COG0378">
    <property type="taxonomic scope" value="Bacteria"/>
</dbReference>
<dbReference type="HOGENOM" id="CLU_072144_1_0_11"/>
<dbReference type="Proteomes" id="UP000001988">
    <property type="component" value="Chromosome"/>
</dbReference>
<dbReference type="GO" id="GO:0005737">
    <property type="term" value="C:cytoplasm"/>
    <property type="evidence" value="ECO:0007669"/>
    <property type="project" value="UniProtKB-SubCell"/>
</dbReference>
<dbReference type="GO" id="GO:0005525">
    <property type="term" value="F:GTP binding"/>
    <property type="evidence" value="ECO:0007669"/>
    <property type="project" value="UniProtKB-KW"/>
</dbReference>
<dbReference type="GO" id="GO:0003924">
    <property type="term" value="F:GTPase activity"/>
    <property type="evidence" value="ECO:0007669"/>
    <property type="project" value="InterPro"/>
</dbReference>
<dbReference type="GO" id="GO:0016151">
    <property type="term" value="F:nickel cation binding"/>
    <property type="evidence" value="ECO:0007669"/>
    <property type="project" value="UniProtKB-UniRule"/>
</dbReference>
<dbReference type="GO" id="GO:0043419">
    <property type="term" value="P:urea catabolic process"/>
    <property type="evidence" value="ECO:0007669"/>
    <property type="project" value="InterPro"/>
</dbReference>
<dbReference type="CDD" id="cd05540">
    <property type="entry name" value="UreG"/>
    <property type="match status" value="1"/>
</dbReference>
<dbReference type="FunFam" id="3.40.50.300:FF:000208">
    <property type="entry name" value="Urease accessory protein UreG"/>
    <property type="match status" value="1"/>
</dbReference>
<dbReference type="Gene3D" id="3.40.50.300">
    <property type="entry name" value="P-loop containing nucleotide triphosphate hydrolases"/>
    <property type="match status" value="1"/>
</dbReference>
<dbReference type="HAMAP" id="MF_01389">
    <property type="entry name" value="UreG"/>
    <property type="match status" value="1"/>
</dbReference>
<dbReference type="InterPro" id="IPR003495">
    <property type="entry name" value="CobW/HypB/UreG_nucleotide-bd"/>
</dbReference>
<dbReference type="InterPro" id="IPR027417">
    <property type="entry name" value="P-loop_NTPase"/>
</dbReference>
<dbReference type="InterPro" id="IPR004400">
    <property type="entry name" value="UreG"/>
</dbReference>
<dbReference type="NCBIfam" id="TIGR00101">
    <property type="entry name" value="ureG"/>
    <property type="match status" value="1"/>
</dbReference>
<dbReference type="PANTHER" id="PTHR31715">
    <property type="entry name" value="UREASE ACCESSORY PROTEIN G"/>
    <property type="match status" value="1"/>
</dbReference>
<dbReference type="PANTHER" id="PTHR31715:SF0">
    <property type="entry name" value="UREASE ACCESSORY PROTEIN G"/>
    <property type="match status" value="1"/>
</dbReference>
<dbReference type="Pfam" id="PF02492">
    <property type="entry name" value="cobW"/>
    <property type="match status" value="1"/>
</dbReference>
<dbReference type="PIRSF" id="PIRSF005624">
    <property type="entry name" value="Ni-bind_GTPase"/>
    <property type="match status" value="1"/>
</dbReference>
<dbReference type="SUPFAM" id="SSF52540">
    <property type="entry name" value="P-loop containing nucleoside triphosphate hydrolases"/>
    <property type="match status" value="1"/>
</dbReference>
<reference key="1">
    <citation type="journal article" date="2008" name="PLoS ONE">
        <title>Genetic basis of virulence attenuation revealed by comparative genomic analysis of Mycobacterium tuberculosis strain H37Ra versus H37Rv.</title>
        <authorList>
            <person name="Zheng H."/>
            <person name="Lu L."/>
            <person name="Wang B."/>
            <person name="Pu S."/>
            <person name="Zhang X."/>
            <person name="Zhu G."/>
            <person name="Shi W."/>
            <person name="Zhang L."/>
            <person name="Wang H."/>
            <person name="Wang S."/>
            <person name="Zhao G."/>
            <person name="Zhang Y."/>
        </authorList>
    </citation>
    <scope>NUCLEOTIDE SEQUENCE [LARGE SCALE GENOMIC DNA]</scope>
    <source>
        <strain>ATCC 25177 / H37Ra</strain>
    </source>
</reference>
<comment type="function">
    <text evidence="1">Facilitates the functional incorporation of the urease nickel metallocenter. This process requires GTP hydrolysis, probably effectuated by UreG.</text>
</comment>
<comment type="subunit">
    <text evidence="1">Homodimer. UreD, UreF and UreG form a complex that acts as a GTP-hydrolysis-dependent molecular chaperone, activating the urease apoprotein by helping to assemble the nickel containing metallocenter of UreC. The UreE protein probably delivers the nickel.</text>
</comment>
<comment type="subcellular location">
    <subcellularLocation>
        <location evidence="1">Cytoplasm</location>
    </subcellularLocation>
</comment>
<comment type="similarity">
    <text evidence="1">Belongs to the SIMIBI class G3E GTPase family. UreG subfamily.</text>
</comment>
<evidence type="ECO:0000255" key="1">
    <source>
        <dbReference type="HAMAP-Rule" id="MF_01389"/>
    </source>
</evidence>
<evidence type="ECO:0000256" key="2">
    <source>
        <dbReference type="SAM" id="MobiDB-lite"/>
    </source>
</evidence>
<gene>
    <name evidence="1" type="primary">ureG</name>
    <name type="ordered locus">MRA_1863</name>
</gene>
<name>UREG_MYCTA</name>
<sequence length="224" mass="23348">MATHSHPHSHTVPARPRRVRKPGEPLRIGVGGPVGSGKTALVAALCRQLRGELSLAVLTNDIYTTEDADFLRTHAVLPDDRIAAVQTGGCPHTAIRDDITANLDAIDELMAAHDALDLILVESGGDNLTATFSSGLVDAQIFVIDVAGGDKVPRKGGPGVTYSDLLVVNKTDLAALVGADLAVMARDADAVRDGRPTVLQSLTEDPAASDVVAWVRSQLAADGV</sequence>
<accession>A5U3L9</accession>